<sequence length="150" mass="17186">MGIKIIANNKKAYHDYFIDEVLEAGMVLLGTEVKSLRLGKANLKDAFCRIMGGELYVNNLHISPYEFGNRENADPTRARKLLVHRAELDKLARKVDEKGLSLVPTKLYFKEGRVKIEIGIARGKKLHDKRQTLKSKEADREMARALRDRH</sequence>
<keyword id="KW-0963">Cytoplasm</keyword>
<keyword id="KW-1185">Reference proteome</keyword>
<keyword id="KW-0694">RNA-binding</keyword>
<comment type="function">
    <text evidence="1">Required for rescue of stalled ribosomes mediated by trans-translation. Binds to transfer-messenger RNA (tmRNA), required for stable association of tmRNA with ribosomes. tmRNA and SmpB together mimic tRNA shape, replacing the anticodon stem-loop with SmpB. tmRNA is encoded by the ssrA gene; the 2 termini fold to resemble tRNA(Ala) and it encodes a 'tag peptide', a short internal open reading frame. During trans-translation Ala-aminoacylated tmRNA acts like a tRNA, entering the A-site of stalled ribosomes, displacing the stalled mRNA. The ribosome then switches to translate the ORF on the tmRNA; the nascent peptide is terminated with the 'tag peptide' encoded by the tmRNA and targeted for degradation. The ribosome is freed to recommence translation, which seems to be the essential function of trans-translation.</text>
</comment>
<comment type="subcellular location">
    <subcellularLocation>
        <location evidence="1">Cytoplasm</location>
    </subcellularLocation>
    <text evidence="1">The tmRNA-SmpB complex associates with stalled 70S ribosomes.</text>
</comment>
<comment type="similarity">
    <text evidence="1">Belongs to the SmpB family.</text>
</comment>
<accession>Q3A3J2</accession>
<feature type="chain" id="PRO_1000002100" description="SsrA-binding protein">
    <location>
        <begin position="1"/>
        <end position="150"/>
    </location>
</feature>
<feature type="region of interest" description="Disordered" evidence="2">
    <location>
        <begin position="129"/>
        <end position="150"/>
    </location>
</feature>
<name>SSRP_SYNC1</name>
<dbReference type="EMBL" id="CP000142">
    <property type="protein sequence ID" value="ABA89065.1"/>
    <property type="molecule type" value="Genomic_DNA"/>
</dbReference>
<dbReference type="RefSeq" id="WP_011341568.1">
    <property type="nucleotide sequence ID" value="NC_007498.2"/>
</dbReference>
<dbReference type="SMR" id="Q3A3J2"/>
<dbReference type="STRING" id="338963.Pcar_1824"/>
<dbReference type="KEGG" id="pca:Pcar_1824"/>
<dbReference type="eggNOG" id="COG0691">
    <property type="taxonomic scope" value="Bacteria"/>
</dbReference>
<dbReference type="HOGENOM" id="CLU_108953_0_1_7"/>
<dbReference type="OrthoDB" id="9805462at2"/>
<dbReference type="Proteomes" id="UP000002534">
    <property type="component" value="Chromosome"/>
</dbReference>
<dbReference type="GO" id="GO:0005829">
    <property type="term" value="C:cytosol"/>
    <property type="evidence" value="ECO:0007669"/>
    <property type="project" value="TreeGrafter"/>
</dbReference>
<dbReference type="GO" id="GO:0003723">
    <property type="term" value="F:RNA binding"/>
    <property type="evidence" value="ECO:0007669"/>
    <property type="project" value="UniProtKB-UniRule"/>
</dbReference>
<dbReference type="GO" id="GO:0070929">
    <property type="term" value="P:trans-translation"/>
    <property type="evidence" value="ECO:0007669"/>
    <property type="project" value="UniProtKB-UniRule"/>
</dbReference>
<dbReference type="CDD" id="cd09294">
    <property type="entry name" value="SmpB"/>
    <property type="match status" value="1"/>
</dbReference>
<dbReference type="Gene3D" id="2.40.280.10">
    <property type="match status" value="1"/>
</dbReference>
<dbReference type="HAMAP" id="MF_00023">
    <property type="entry name" value="SmpB"/>
    <property type="match status" value="1"/>
</dbReference>
<dbReference type="InterPro" id="IPR023620">
    <property type="entry name" value="SmpB"/>
</dbReference>
<dbReference type="InterPro" id="IPR000037">
    <property type="entry name" value="SsrA-bd_prot"/>
</dbReference>
<dbReference type="InterPro" id="IPR020081">
    <property type="entry name" value="SsrA-bd_prot_CS"/>
</dbReference>
<dbReference type="NCBIfam" id="NF003843">
    <property type="entry name" value="PRK05422.1"/>
    <property type="match status" value="1"/>
</dbReference>
<dbReference type="NCBIfam" id="TIGR00086">
    <property type="entry name" value="smpB"/>
    <property type="match status" value="1"/>
</dbReference>
<dbReference type="PANTHER" id="PTHR30308:SF2">
    <property type="entry name" value="SSRA-BINDING PROTEIN"/>
    <property type="match status" value="1"/>
</dbReference>
<dbReference type="PANTHER" id="PTHR30308">
    <property type="entry name" value="TMRNA-BINDING COMPONENT OF TRANS-TRANSLATION TAGGING COMPLEX"/>
    <property type="match status" value="1"/>
</dbReference>
<dbReference type="Pfam" id="PF01668">
    <property type="entry name" value="SmpB"/>
    <property type="match status" value="1"/>
</dbReference>
<dbReference type="SUPFAM" id="SSF74982">
    <property type="entry name" value="Small protein B (SmpB)"/>
    <property type="match status" value="1"/>
</dbReference>
<dbReference type="PROSITE" id="PS01317">
    <property type="entry name" value="SSRP"/>
    <property type="match status" value="1"/>
</dbReference>
<gene>
    <name evidence="1" type="primary">smpB</name>
    <name type="ordered locus">Pcar_1824</name>
</gene>
<organism>
    <name type="scientific">Syntrophotalea carbinolica (strain DSM 2380 / NBRC 103641 / GraBd1)</name>
    <name type="common">Pelobacter carbinolicus</name>
    <dbReference type="NCBI Taxonomy" id="338963"/>
    <lineage>
        <taxon>Bacteria</taxon>
        <taxon>Pseudomonadati</taxon>
        <taxon>Thermodesulfobacteriota</taxon>
        <taxon>Desulfuromonadia</taxon>
        <taxon>Desulfuromonadales</taxon>
        <taxon>Syntrophotaleaceae</taxon>
        <taxon>Syntrophotalea</taxon>
    </lineage>
</organism>
<protein>
    <recommendedName>
        <fullName evidence="1">SsrA-binding protein</fullName>
    </recommendedName>
    <alternativeName>
        <fullName evidence="1">Small protein B</fullName>
    </alternativeName>
</protein>
<reference key="1">
    <citation type="submission" date="2005-10" db="EMBL/GenBank/DDBJ databases">
        <title>Complete sequence of Pelobacter carbinolicus DSM 2380.</title>
        <authorList>
            <person name="Copeland A."/>
            <person name="Lucas S."/>
            <person name="Lapidus A."/>
            <person name="Barry K."/>
            <person name="Detter J.C."/>
            <person name="Glavina T."/>
            <person name="Hammon N."/>
            <person name="Israni S."/>
            <person name="Pitluck S."/>
            <person name="Chertkov O."/>
            <person name="Schmutz J."/>
            <person name="Larimer F."/>
            <person name="Land M."/>
            <person name="Kyrpides N."/>
            <person name="Ivanova N."/>
            <person name="Richardson P."/>
        </authorList>
    </citation>
    <scope>NUCLEOTIDE SEQUENCE [LARGE SCALE GENOMIC DNA]</scope>
    <source>
        <strain>DSM 2380 / NBRC 103641 / GraBd1</strain>
    </source>
</reference>
<proteinExistence type="inferred from homology"/>
<evidence type="ECO:0000255" key="1">
    <source>
        <dbReference type="HAMAP-Rule" id="MF_00023"/>
    </source>
</evidence>
<evidence type="ECO:0000256" key="2">
    <source>
        <dbReference type="SAM" id="MobiDB-lite"/>
    </source>
</evidence>